<name>RSMG_SHEFN</name>
<gene>
    <name evidence="1" type="primary">rsmG</name>
    <name type="ordered locus">Sfri_4055</name>
</gene>
<protein>
    <recommendedName>
        <fullName evidence="1">Ribosomal RNA small subunit methyltransferase G</fullName>
        <ecNumber evidence="1">2.1.1.170</ecNumber>
    </recommendedName>
    <alternativeName>
        <fullName evidence="1">16S rRNA 7-methylguanosine methyltransferase</fullName>
        <shortName evidence="1">16S rRNA m7G methyltransferase</shortName>
    </alternativeName>
</protein>
<evidence type="ECO:0000255" key="1">
    <source>
        <dbReference type="HAMAP-Rule" id="MF_00074"/>
    </source>
</evidence>
<evidence type="ECO:0000305" key="2"/>
<accession>Q07VT4</accession>
<comment type="function">
    <text evidence="1">Specifically methylates the N7 position of guanine in position 527 of 16S rRNA.</text>
</comment>
<comment type="catalytic activity">
    <reaction evidence="1">
        <text>guanosine(527) in 16S rRNA + S-adenosyl-L-methionine = N(7)-methylguanosine(527) in 16S rRNA + S-adenosyl-L-homocysteine</text>
        <dbReference type="Rhea" id="RHEA:42732"/>
        <dbReference type="Rhea" id="RHEA-COMP:10209"/>
        <dbReference type="Rhea" id="RHEA-COMP:10210"/>
        <dbReference type="ChEBI" id="CHEBI:57856"/>
        <dbReference type="ChEBI" id="CHEBI:59789"/>
        <dbReference type="ChEBI" id="CHEBI:74269"/>
        <dbReference type="ChEBI" id="CHEBI:74480"/>
        <dbReference type="EC" id="2.1.1.170"/>
    </reaction>
</comment>
<comment type="subcellular location">
    <subcellularLocation>
        <location evidence="1">Cytoplasm</location>
    </subcellularLocation>
</comment>
<comment type="similarity">
    <text evidence="1">Belongs to the methyltransferase superfamily. RNA methyltransferase RsmG family.</text>
</comment>
<comment type="sequence caution" evidence="2">
    <conflict type="erroneous initiation">
        <sequence resource="EMBL-CDS" id="ABI73880"/>
    </conflict>
</comment>
<keyword id="KW-0963">Cytoplasm</keyword>
<keyword id="KW-0489">Methyltransferase</keyword>
<keyword id="KW-1185">Reference proteome</keyword>
<keyword id="KW-0698">rRNA processing</keyword>
<keyword id="KW-0949">S-adenosyl-L-methionine</keyword>
<keyword id="KW-0808">Transferase</keyword>
<proteinExistence type="inferred from homology"/>
<reference key="1">
    <citation type="submission" date="2006-08" db="EMBL/GenBank/DDBJ databases">
        <title>Complete sequence of Shewanella frigidimarina NCIMB 400.</title>
        <authorList>
            <consortium name="US DOE Joint Genome Institute"/>
            <person name="Copeland A."/>
            <person name="Lucas S."/>
            <person name="Lapidus A."/>
            <person name="Barry K."/>
            <person name="Detter J.C."/>
            <person name="Glavina del Rio T."/>
            <person name="Hammon N."/>
            <person name="Israni S."/>
            <person name="Dalin E."/>
            <person name="Tice H."/>
            <person name="Pitluck S."/>
            <person name="Fredrickson J.K."/>
            <person name="Kolker E."/>
            <person name="McCuel L.A."/>
            <person name="DiChristina T."/>
            <person name="Nealson K.H."/>
            <person name="Newman D."/>
            <person name="Tiedje J.M."/>
            <person name="Zhou J."/>
            <person name="Romine M.F."/>
            <person name="Culley D.E."/>
            <person name="Serres M."/>
            <person name="Chertkov O."/>
            <person name="Brettin T."/>
            <person name="Bruce D."/>
            <person name="Han C."/>
            <person name="Tapia R."/>
            <person name="Gilna P."/>
            <person name="Schmutz J."/>
            <person name="Larimer F."/>
            <person name="Land M."/>
            <person name="Hauser L."/>
            <person name="Kyrpides N."/>
            <person name="Mikhailova N."/>
            <person name="Richardson P."/>
        </authorList>
    </citation>
    <scope>NUCLEOTIDE SEQUENCE [LARGE SCALE GENOMIC DNA]</scope>
    <source>
        <strain>NCIMB 400</strain>
    </source>
</reference>
<organism>
    <name type="scientific">Shewanella frigidimarina (strain NCIMB 400)</name>
    <dbReference type="NCBI Taxonomy" id="318167"/>
    <lineage>
        <taxon>Bacteria</taxon>
        <taxon>Pseudomonadati</taxon>
        <taxon>Pseudomonadota</taxon>
        <taxon>Gammaproteobacteria</taxon>
        <taxon>Alteromonadales</taxon>
        <taxon>Shewanellaceae</taxon>
        <taxon>Shewanella</taxon>
    </lineage>
</organism>
<feature type="chain" id="PRO_0000335426" description="Ribosomal RNA small subunit methyltransferase G">
    <location>
        <begin position="1"/>
        <end position="206"/>
    </location>
</feature>
<feature type="binding site" evidence="1">
    <location>
        <position position="74"/>
    </location>
    <ligand>
        <name>S-adenosyl-L-methionine</name>
        <dbReference type="ChEBI" id="CHEBI:59789"/>
    </ligand>
</feature>
<feature type="binding site" evidence="1">
    <location>
        <position position="79"/>
    </location>
    <ligand>
        <name>S-adenosyl-L-methionine</name>
        <dbReference type="ChEBI" id="CHEBI:59789"/>
    </ligand>
</feature>
<feature type="binding site" evidence="1">
    <location>
        <begin position="125"/>
        <end position="126"/>
    </location>
    <ligand>
        <name>S-adenosyl-L-methionine</name>
        <dbReference type="ChEBI" id="CHEBI:59789"/>
    </ligand>
</feature>
<feature type="binding site" evidence="1">
    <location>
        <position position="140"/>
    </location>
    <ligand>
        <name>S-adenosyl-L-methionine</name>
        <dbReference type="ChEBI" id="CHEBI:59789"/>
    </ligand>
</feature>
<sequence length="206" mass="23532">MLSAQLKTYLAEMNMSATELQQKQLIGFVEMLDKWNKAYNLTAVRDPEQMLIRHVMDSLTVSPYLEGQRFIDVGTGPGLPGIPLAIMNPDKQFVLLDSLGKRIRFQKQVQFELKINNITSVESRVEAYIPEIKFDGVLSRAFASIQDMLSWCHHLPTEKGTFYALKGQLNQQELQEMPTGFSLVETIVLHVPMLDEQRHLLKIAKQ</sequence>
<dbReference type="EC" id="2.1.1.170" evidence="1"/>
<dbReference type="EMBL" id="CP000447">
    <property type="protein sequence ID" value="ABI73880.1"/>
    <property type="status" value="ALT_INIT"/>
    <property type="molecule type" value="Genomic_DNA"/>
</dbReference>
<dbReference type="RefSeq" id="WP_041413262.1">
    <property type="nucleotide sequence ID" value="NC_008345.1"/>
</dbReference>
<dbReference type="SMR" id="Q07VT4"/>
<dbReference type="STRING" id="318167.Sfri_4055"/>
<dbReference type="KEGG" id="sfr:Sfri_4055"/>
<dbReference type="eggNOG" id="COG0357">
    <property type="taxonomic scope" value="Bacteria"/>
</dbReference>
<dbReference type="HOGENOM" id="CLU_065341_2_0_6"/>
<dbReference type="OrthoDB" id="9808773at2"/>
<dbReference type="Proteomes" id="UP000000684">
    <property type="component" value="Chromosome"/>
</dbReference>
<dbReference type="GO" id="GO:0005829">
    <property type="term" value="C:cytosol"/>
    <property type="evidence" value="ECO:0007669"/>
    <property type="project" value="TreeGrafter"/>
</dbReference>
<dbReference type="GO" id="GO:0070043">
    <property type="term" value="F:rRNA (guanine-N7-)-methyltransferase activity"/>
    <property type="evidence" value="ECO:0007669"/>
    <property type="project" value="UniProtKB-UniRule"/>
</dbReference>
<dbReference type="CDD" id="cd02440">
    <property type="entry name" value="AdoMet_MTases"/>
    <property type="match status" value="1"/>
</dbReference>
<dbReference type="FunFam" id="3.40.50.150:FF:000032">
    <property type="entry name" value="Ribosomal RNA small subunit methyltransferase G"/>
    <property type="match status" value="1"/>
</dbReference>
<dbReference type="Gene3D" id="3.40.50.150">
    <property type="entry name" value="Vaccinia Virus protein VP39"/>
    <property type="match status" value="1"/>
</dbReference>
<dbReference type="HAMAP" id="MF_00074">
    <property type="entry name" value="16SrRNA_methyltr_G"/>
    <property type="match status" value="1"/>
</dbReference>
<dbReference type="InterPro" id="IPR003682">
    <property type="entry name" value="rRNA_ssu_MeTfrase_G"/>
</dbReference>
<dbReference type="InterPro" id="IPR029063">
    <property type="entry name" value="SAM-dependent_MTases_sf"/>
</dbReference>
<dbReference type="NCBIfam" id="TIGR00138">
    <property type="entry name" value="rsmG_gidB"/>
    <property type="match status" value="1"/>
</dbReference>
<dbReference type="PANTHER" id="PTHR31760">
    <property type="entry name" value="S-ADENOSYL-L-METHIONINE-DEPENDENT METHYLTRANSFERASES SUPERFAMILY PROTEIN"/>
    <property type="match status" value="1"/>
</dbReference>
<dbReference type="PANTHER" id="PTHR31760:SF0">
    <property type="entry name" value="S-ADENOSYL-L-METHIONINE-DEPENDENT METHYLTRANSFERASES SUPERFAMILY PROTEIN"/>
    <property type="match status" value="1"/>
</dbReference>
<dbReference type="Pfam" id="PF02527">
    <property type="entry name" value="GidB"/>
    <property type="match status" value="1"/>
</dbReference>
<dbReference type="PIRSF" id="PIRSF003078">
    <property type="entry name" value="GidB"/>
    <property type="match status" value="1"/>
</dbReference>
<dbReference type="SUPFAM" id="SSF53335">
    <property type="entry name" value="S-adenosyl-L-methionine-dependent methyltransferases"/>
    <property type="match status" value="1"/>
</dbReference>